<dbReference type="EC" id="2.8.4.3" evidence="1"/>
<dbReference type="EMBL" id="CR628336">
    <property type="protein sequence ID" value="CAH12439.1"/>
    <property type="molecule type" value="Genomic_DNA"/>
</dbReference>
<dbReference type="RefSeq" id="WP_010947064.1">
    <property type="nucleotide sequence ID" value="NC_006368.1"/>
</dbReference>
<dbReference type="SMR" id="Q5X5N2"/>
<dbReference type="GeneID" id="57035324"/>
<dbReference type="KEGG" id="lpp:lpp1288"/>
<dbReference type="LegioList" id="lpp1288"/>
<dbReference type="HOGENOM" id="CLU_018697_2_0_6"/>
<dbReference type="GO" id="GO:0005829">
    <property type="term" value="C:cytosol"/>
    <property type="evidence" value="ECO:0007669"/>
    <property type="project" value="TreeGrafter"/>
</dbReference>
<dbReference type="GO" id="GO:0051539">
    <property type="term" value="F:4 iron, 4 sulfur cluster binding"/>
    <property type="evidence" value="ECO:0007669"/>
    <property type="project" value="UniProtKB-UniRule"/>
</dbReference>
<dbReference type="GO" id="GO:0046872">
    <property type="term" value="F:metal ion binding"/>
    <property type="evidence" value="ECO:0007669"/>
    <property type="project" value="UniProtKB-KW"/>
</dbReference>
<dbReference type="GO" id="GO:0035597">
    <property type="term" value="F:N6-isopentenyladenosine methylthiotransferase activity"/>
    <property type="evidence" value="ECO:0007669"/>
    <property type="project" value="TreeGrafter"/>
</dbReference>
<dbReference type="CDD" id="cd01335">
    <property type="entry name" value="Radical_SAM"/>
    <property type="match status" value="1"/>
</dbReference>
<dbReference type="FunFam" id="3.40.50.12160:FF:000001">
    <property type="entry name" value="tRNA-2-methylthio-N(6)-dimethylallyladenosine synthase"/>
    <property type="match status" value="1"/>
</dbReference>
<dbReference type="FunFam" id="3.80.30.20:FF:000001">
    <property type="entry name" value="tRNA-2-methylthio-N(6)-dimethylallyladenosine synthase 2"/>
    <property type="match status" value="1"/>
</dbReference>
<dbReference type="Gene3D" id="3.40.50.12160">
    <property type="entry name" value="Methylthiotransferase, N-terminal domain"/>
    <property type="match status" value="1"/>
</dbReference>
<dbReference type="Gene3D" id="3.80.30.20">
    <property type="entry name" value="tm_1862 like domain"/>
    <property type="match status" value="1"/>
</dbReference>
<dbReference type="HAMAP" id="MF_01864">
    <property type="entry name" value="tRNA_metthiotr_MiaB"/>
    <property type="match status" value="1"/>
</dbReference>
<dbReference type="InterPro" id="IPR006638">
    <property type="entry name" value="Elp3/MiaA/NifB-like_rSAM"/>
</dbReference>
<dbReference type="InterPro" id="IPR005839">
    <property type="entry name" value="Methylthiotransferase"/>
</dbReference>
<dbReference type="InterPro" id="IPR020612">
    <property type="entry name" value="Methylthiotransferase_CS"/>
</dbReference>
<dbReference type="InterPro" id="IPR013848">
    <property type="entry name" value="Methylthiotransferase_N"/>
</dbReference>
<dbReference type="InterPro" id="IPR038135">
    <property type="entry name" value="Methylthiotransferase_N_sf"/>
</dbReference>
<dbReference type="InterPro" id="IPR006463">
    <property type="entry name" value="MiaB_methiolase"/>
</dbReference>
<dbReference type="InterPro" id="IPR007197">
    <property type="entry name" value="rSAM"/>
</dbReference>
<dbReference type="InterPro" id="IPR023404">
    <property type="entry name" value="rSAM_horseshoe"/>
</dbReference>
<dbReference type="InterPro" id="IPR002792">
    <property type="entry name" value="TRAM_dom"/>
</dbReference>
<dbReference type="NCBIfam" id="TIGR01574">
    <property type="entry name" value="miaB-methiolase"/>
    <property type="match status" value="1"/>
</dbReference>
<dbReference type="NCBIfam" id="TIGR00089">
    <property type="entry name" value="MiaB/RimO family radical SAM methylthiotransferase"/>
    <property type="match status" value="1"/>
</dbReference>
<dbReference type="PANTHER" id="PTHR43020">
    <property type="entry name" value="CDK5 REGULATORY SUBUNIT-ASSOCIATED PROTEIN 1"/>
    <property type="match status" value="1"/>
</dbReference>
<dbReference type="PANTHER" id="PTHR43020:SF2">
    <property type="entry name" value="MITOCHONDRIAL TRNA METHYLTHIOTRANSFERASE CDK5RAP1"/>
    <property type="match status" value="1"/>
</dbReference>
<dbReference type="Pfam" id="PF04055">
    <property type="entry name" value="Radical_SAM"/>
    <property type="match status" value="1"/>
</dbReference>
<dbReference type="Pfam" id="PF01938">
    <property type="entry name" value="TRAM"/>
    <property type="match status" value="1"/>
</dbReference>
<dbReference type="Pfam" id="PF00919">
    <property type="entry name" value="UPF0004"/>
    <property type="match status" value="1"/>
</dbReference>
<dbReference type="SFLD" id="SFLDF00273">
    <property type="entry name" value="(dimethylallyl)adenosine_tRNA"/>
    <property type="match status" value="1"/>
</dbReference>
<dbReference type="SFLD" id="SFLDG01082">
    <property type="entry name" value="B12-binding_domain_containing"/>
    <property type="match status" value="1"/>
</dbReference>
<dbReference type="SFLD" id="SFLDG01061">
    <property type="entry name" value="methylthiotransferase"/>
    <property type="match status" value="1"/>
</dbReference>
<dbReference type="SMART" id="SM00729">
    <property type="entry name" value="Elp3"/>
    <property type="match status" value="1"/>
</dbReference>
<dbReference type="SUPFAM" id="SSF102114">
    <property type="entry name" value="Radical SAM enzymes"/>
    <property type="match status" value="1"/>
</dbReference>
<dbReference type="PROSITE" id="PS51449">
    <property type="entry name" value="MTTASE_N"/>
    <property type="match status" value="1"/>
</dbReference>
<dbReference type="PROSITE" id="PS01278">
    <property type="entry name" value="MTTASE_RADICAL"/>
    <property type="match status" value="1"/>
</dbReference>
<dbReference type="PROSITE" id="PS51918">
    <property type="entry name" value="RADICAL_SAM"/>
    <property type="match status" value="1"/>
</dbReference>
<dbReference type="PROSITE" id="PS50926">
    <property type="entry name" value="TRAM"/>
    <property type="match status" value="1"/>
</dbReference>
<reference key="1">
    <citation type="journal article" date="2004" name="Nat. Genet.">
        <title>Evidence in the Legionella pneumophila genome for exploitation of host cell functions and high genome plasticity.</title>
        <authorList>
            <person name="Cazalet C."/>
            <person name="Rusniok C."/>
            <person name="Brueggemann H."/>
            <person name="Zidane N."/>
            <person name="Magnier A."/>
            <person name="Ma L."/>
            <person name="Tichit M."/>
            <person name="Jarraud S."/>
            <person name="Bouchier C."/>
            <person name="Vandenesch F."/>
            <person name="Kunst F."/>
            <person name="Etienne J."/>
            <person name="Glaser P."/>
            <person name="Buchrieser C."/>
        </authorList>
    </citation>
    <scope>NUCLEOTIDE SEQUENCE [LARGE SCALE GENOMIC DNA]</scope>
    <source>
        <strain>Paris</strain>
    </source>
</reference>
<proteinExistence type="inferred from homology"/>
<evidence type="ECO:0000255" key="1">
    <source>
        <dbReference type="HAMAP-Rule" id="MF_01864"/>
    </source>
</evidence>
<evidence type="ECO:0000255" key="2">
    <source>
        <dbReference type="PROSITE-ProRule" id="PRU01266"/>
    </source>
</evidence>
<gene>
    <name evidence="1" type="primary">miaB</name>
    <name type="ordered locus">lpp1288</name>
</gene>
<name>MIAB_LEGPA</name>
<organism>
    <name type="scientific">Legionella pneumophila (strain Paris)</name>
    <dbReference type="NCBI Taxonomy" id="297246"/>
    <lineage>
        <taxon>Bacteria</taxon>
        <taxon>Pseudomonadati</taxon>
        <taxon>Pseudomonadota</taxon>
        <taxon>Gammaproteobacteria</taxon>
        <taxon>Legionellales</taxon>
        <taxon>Legionellaceae</taxon>
        <taxon>Legionella</taxon>
    </lineage>
</organism>
<accession>Q5X5N2</accession>
<protein>
    <recommendedName>
        <fullName evidence="1">tRNA-2-methylthio-N(6)-dimethylallyladenosine synthase</fullName>
        <ecNumber evidence="1">2.8.4.3</ecNumber>
    </recommendedName>
    <alternativeName>
        <fullName evidence="1">(Dimethylallyl)adenosine tRNA methylthiotransferase MiaB</fullName>
    </alternativeName>
    <alternativeName>
        <fullName evidence="1">tRNA-i(6)A37 methylthiotransferase</fullName>
    </alternativeName>
</protein>
<keyword id="KW-0004">4Fe-4S</keyword>
<keyword id="KW-0963">Cytoplasm</keyword>
<keyword id="KW-0408">Iron</keyword>
<keyword id="KW-0411">Iron-sulfur</keyword>
<keyword id="KW-0479">Metal-binding</keyword>
<keyword id="KW-0949">S-adenosyl-L-methionine</keyword>
<keyword id="KW-0808">Transferase</keyword>
<keyword id="KW-0819">tRNA processing</keyword>
<sequence length="447" mass="50050">MVKKLYIKTNGCQMNEYDSSKMAEVLYASHGLVKTDQVEDADVILLNTCSIREKAQEKVFSQLGQWREYKAKNPHVLIGVGGCVASQEGSDIIKRAPFVDIVFGPQTLHRLPALLNERLEKNKSVVDISFPEIEKFDHLPAPRAEGPTAFVSIMEGCSKYCSFCVVPYTRGEEISRPFDDVLAECYQLASQGVREINLLGQNVNDYRGIMDNGDIADLALLIHYIAAIDGIGRIRFTTSHPLAFSENLINAYAEVPELANHLHLPVQSGSDRILSLMKRGYTALEFKSKIRKLRKIRPDIRLSTDIIVGFPGETDKDFQDTMDLVHEIGFDTSFSFIYSPRPGTPAANLPDDTPMEIKKQRLQILQNRLLMNAARYSESMIGSKQKILVTGFSKKSSQQLSGRTECNRVVNFDGPPHLIGQFIDVQISDALPNSLRGRLLEKEMQPA</sequence>
<feature type="chain" id="PRO_0000374355" description="tRNA-2-methylthio-N(6)-dimethylallyladenosine synthase">
    <location>
        <begin position="1"/>
        <end position="447"/>
    </location>
</feature>
<feature type="domain" description="MTTase N-terminal" evidence="1">
    <location>
        <begin position="3"/>
        <end position="120"/>
    </location>
</feature>
<feature type="domain" description="Radical SAM core" evidence="2">
    <location>
        <begin position="143"/>
        <end position="375"/>
    </location>
</feature>
<feature type="domain" description="TRAM" evidence="1">
    <location>
        <begin position="378"/>
        <end position="441"/>
    </location>
</feature>
<feature type="binding site" evidence="1">
    <location>
        <position position="12"/>
    </location>
    <ligand>
        <name>[4Fe-4S] cluster</name>
        <dbReference type="ChEBI" id="CHEBI:49883"/>
        <label>1</label>
    </ligand>
</feature>
<feature type="binding site" evidence="1">
    <location>
        <position position="49"/>
    </location>
    <ligand>
        <name>[4Fe-4S] cluster</name>
        <dbReference type="ChEBI" id="CHEBI:49883"/>
        <label>1</label>
    </ligand>
</feature>
<feature type="binding site" evidence="1">
    <location>
        <position position="83"/>
    </location>
    <ligand>
        <name>[4Fe-4S] cluster</name>
        <dbReference type="ChEBI" id="CHEBI:49883"/>
        <label>1</label>
    </ligand>
</feature>
<feature type="binding site" evidence="1">
    <location>
        <position position="157"/>
    </location>
    <ligand>
        <name>[4Fe-4S] cluster</name>
        <dbReference type="ChEBI" id="CHEBI:49883"/>
        <label>2</label>
        <note>4Fe-4S-S-AdoMet</note>
    </ligand>
</feature>
<feature type="binding site" evidence="1">
    <location>
        <position position="161"/>
    </location>
    <ligand>
        <name>[4Fe-4S] cluster</name>
        <dbReference type="ChEBI" id="CHEBI:49883"/>
        <label>2</label>
        <note>4Fe-4S-S-AdoMet</note>
    </ligand>
</feature>
<feature type="binding site" evidence="1">
    <location>
        <position position="164"/>
    </location>
    <ligand>
        <name>[4Fe-4S] cluster</name>
        <dbReference type="ChEBI" id="CHEBI:49883"/>
        <label>2</label>
        <note>4Fe-4S-S-AdoMet</note>
    </ligand>
</feature>
<comment type="function">
    <text evidence="1">Catalyzes the methylthiolation of N6-(dimethylallyl)adenosine (i(6)A), leading to the formation of 2-methylthio-N6-(dimethylallyl)adenosine (ms(2)i(6)A) at position 37 in tRNAs that read codons beginning with uridine.</text>
</comment>
<comment type="catalytic activity">
    <reaction evidence="1">
        <text>N(6)-dimethylallyladenosine(37) in tRNA + (sulfur carrier)-SH + AH2 + 2 S-adenosyl-L-methionine = 2-methylsulfanyl-N(6)-dimethylallyladenosine(37) in tRNA + (sulfur carrier)-H + 5'-deoxyadenosine + L-methionine + A + S-adenosyl-L-homocysteine + 2 H(+)</text>
        <dbReference type="Rhea" id="RHEA:37067"/>
        <dbReference type="Rhea" id="RHEA-COMP:10375"/>
        <dbReference type="Rhea" id="RHEA-COMP:10376"/>
        <dbReference type="Rhea" id="RHEA-COMP:14737"/>
        <dbReference type="Rhea" id="RHEA-COMP:14739"/>
        <dbReference type="ChEBI" id="CHEBI:13193"/>
        <dbReference type="ChEBI" id="CHEBI:15378"/>
        <dbReference type="ChEBI" id="CHEBI:17319"/>
        <dbReference type="ChEBI" id="CHEBI:17499"/>
        <dbReference type="ChEBI" id="CHEBI:29917"/>
        <dbReference type="ChEBI" id="CHEBI:57844"/>
        <dbReference type="ChEBI" id="CHEBI:57856"/>
        <dbReference type="ChEBI" id="CHEBI:59789"/>
        <dbReference type="ChEBI" id="CHEBI:64428"/>
        <dbReference type="ChEBI" id="CHEBI:74415"/>
        <dbReference type="ChEBI" id="CHEBI:74417"/>
        <dbReference type="EC" id="2.8.4.3"/>
    </reaction>
</comment>
<comment type="cofactor">
    <cofactor evidence="1">
        <name>[4Fe-4S] cluster</name>
        <dbReference type="ChEBI" id="CHEBI:49883"/>
    </cofactor>
    <text evidence="1">Binds 2 [4Fe-4S] clusters. One cluster is coordinated with 3 cysteines and an exchangeable S-adenosyl-L-methionine.</text>
</comment>
<comment type="subunit">
    <text evidence="1">Monomer.</text>
</comment>
<comment type="subcellular location">
    <subcellularLocation>
        <location evidence="1">Cytoplasm</location>
    </subcellularLocation>
</comment>
<comment type="similarity">
    <text evidence="1">Belongs to the methylthiotransferase family. MiaB subfamily.</text>
</comment>